<sequence>MNPFVNLFIQHSKKQIFLNNNKNNILLNFNSKLYSTITYKNNNNNNNNQIINNKTIMKRKNNEIIQTEEDDDNDNGGIHDCDSCDEVDNEEIIPESPPSKKLQQQQQQQQQQQSKLKPKQTSITDFFSPTVKTSKADKISPFFSNVNNASTTNTTTNNKNVNKKTTTTTTTKKRNNKDEENEDDNEEEEEEEEEEEDKKSKKKTTTTTTTTTTTAYKKKSSPKKKKVNPTENKFSTINYKDDQYVQKEEYSSSKKEKLENVKIGGHVSIKNGYPTLIQSVVAQGFKAVAFFTNPPRTWKHHTVKLDDSIKFKQSCKSLNFDVNCILPHGSYFLNLGSPNKENLQKSRDLMIHEMKNCEILGVKHFNFHPGSHLNEISESESIKIVAESLDYILERTKDVVAVIECTAGQGTNLGYTFEHLRDMIALVKDKTRVGVCLDTCHMFAAGYNISTKSNCDVIFQEFDKVVGFKYLKGVHLNDSKSTCGSKLDRHENIGKGHIGTPCFKYLVNDKRFQNIPMILETVGPYDQEVKLLYSFIEDDDKK</sequence>
<protein>
    <recommendedName>
        <fullName>Endonuclease 4 homolog</fullName>
        <ecNumber>3.1.21.2</ecNumber>
    </recommendedName>
    <alternativeName>
        <fullName>Apurinic/apyrimidinic endonuclease</fullName>
        <shortName>AP endonuclease</shortName>
    </alternativeName>
    <alternativeName>
        <fullName>DdAPN</fullName>
    </alternativeName>
    <alternativeName>
        <fullName>Endodeoxyribonuclease IV homolog</fullName>
    </alternativeName>
    <alternativeName>
        <fullName>Endonuclease IV homolog</fullName>
    </alternativeName>
</protein>
<gene>
    <name type="primary">apnA</name>
    <name type="ORF">DDB_G0279923</name>
</gene>
<keyword id="KW-0175">Coiled coil</keyword>
<keyword id="KW-0227">DNA damage</keyword>
<keyword id="KW-0234">DNA repair</keyword>
<keyword id="KW-0255">Endonuclease</keyword>
<keyword id="KW-0378">Hydrolase</keyword>
<keyword id="KW-0479">Metal-binding</keyword>
<keyword id="KW-0540">Nuclease</keyword>
<keyword id="KW-0539">Nucleus</keyword>
<keyword id="KW-1185">Reference proteome</keyword>
<keyword id="KW-0862">Zinc</keyword>
<organism>
    <name type="scientific">Dictyostelium discoideum</name>
    <name type="common">Social amoeba</name>
    <dbReference type="NCBI Taxonomy" id="44689"/>
    <lineage>
        <taxon>Eukaryota</taxon>
        <taxon>Amoebozoa</taxon>
        <taxon>Evosea</taxon>
        <taxon>Eumycetozoa</taxon>
        <taxon>Dictyostelia</taxon>
        <taxon>Dictyosteliales</taxon>
        <taxon>Dictyosteliaceae</taxon>
        <taxon>Dictyostelium</taxon>
    </lineage>
</organism>
<reference key="1">
    <citation type="journal article" date="2001" name="Mutat. Res.">
        <title>Endonuclease IV homolog from Dictyostelium discoideum: sequencing and functional expression in AP endonuclease-deficient Escherichia coli.</title>
        <authorList>
            <person name="Tsuji A."/>
            <person name="Kodaira K."/>
            <person name="Inoue M."/>
            <person name="Yasukawa H."/>
        </authorList>
    </citation>
    <scope>NUCLEOTIDE SEQUENCE [MRNA]</scope>
    <scope>FUNCTION AS AN ENDONUCLEASE</scope>
    <scope>DOMAIN</scope>
</reference>
<reference key="2">
    <citation type="journal article" date="2005" name="Nature">
        <title>The genome of the social amoeba Dictyostelium discoideum.</title>
        <authorList>
            <person name="Eichinger L."/>
            <person name="Pachebat J.A."/>
            <person name="Gloeckner G."/>
            <person name="Rajandream M.A."/>
            <person name="Sucgang R."/>
            <person name="Berriman M."/>
            <person name="Song J."/>
            <person name="Olsen R."/>
            <person name="Szafranski K."/>
            <person name="Xu Q."/>
            <person name="Tunggal B."/>
            <person name="Kummerfeld S."/>
            <person name="Madera M."/>
            <person name="Konfortov B.A."/>
            <person name="Rivero F."/>
            <person name="Bankier A.T."/>
            <person name="Lehmann R."/>
            <person name="Hamlin N."/>
            <person name="Davies R."/>
            <person name="Gaudet P."/>
            <person name="Fey P."/>
            <person name="Pilcher K."/>
            <person name="Chen G."/>
            <person name="Saunders D."/>
            <person name="Sodergren E.J."/>
            <person name="Davis P."/>
            <person name="Kerhornou A."/>
            <person name="Nie X."/>
            <person name="Hall N."/>
            <person name="Anjard C."/>
            <person name="Hemphill L."/>
            <person name="Bason N."/>
            <person name="Farbrother P."/>
            <person name="Desany B."/>
            <person name="Just E."/>
            <person name="Morio T."/>
            <person name="Rost R."/>
            <person name="Churcher C.M."/>
            <person name="Cooper J."/>
            <person name="Haydock S."/>
            <person name="van Driessche N."/>
            <person name="Cronin A."/>
            <person name="Goodhead I."/>
            <person name="Muzny D.M."/>
            <person name="Mourier T."/>
            <person name="Pain A."/>
            <person name="Lu M."/>
            <person name="Harper D."/>
            <person name="Lindsay R."/>
            <person name="Hauser H."/>
            <person name="James K.D."/>
            <person name="Quiles M."/>
            <person name="Madan Babu M."/>
            <person name="Saito T."/>
            <person name="Buchrieser C."/>
            <person name="Wardroper A."/>
            <person name="Felder M."/>
            <person name="Thangavelu M."/>
            <person name="Johnson D."/>
            <person name="Knights A."/>
            <person name="Loulseged H."/>
            <person name="Mungall K.L."/>
            <person name="Oliver K."/>
            <person name="Price C."/>
            <person name="Quail M.A."/>
            <person name="Urushihara H."/>
            <person name="Hernandez J."/>
            <person name="Rabbinowitsch E."/>
            <person name="Steffen D."/>
            <person name="Sanders M."/>
            <person name="Ma J."/>
            <person name="Kohara Y."/>
            <person name="Sharp S."/>
            <person name="Simmonds M.N."/>
            <person name="Spiegler S."/>
            <person name="Tivey A."/>
            <person name="Sugano S."/>
            <person name="White B."/>
            <person name="Walker D."/>
            <person name="Woodward J.R."/>
            <person name="Winckler T."/>
            <person name="Tanaka Y."/>
            <person name="Shaulsky G."/>
            <person name="Schleicher M."/>
            <person name="Weinstock G.M."/>
            <person name="Rosenthal A."/>
            <person name="Cox E.C."/>
            <person name="Chisholm R.L."/>
            <person name="Gibbs R.A."/>
            <person name="Loomis W.F."/>
            <person name="Platzer M."/>
            <person name="Kay R.R."/>
            <person name="Williams J.G."/>
            <person name="Dear P.H."/>
            <person name="Noegel A.A."/>
            <person name="Barrell B.G."/>
            <person name="Kuspa A."/>
        </authorList>
    </citation>
    <scope>NUCLEOTIDE SEQUENCE [LARGE SCALE GENOMIC DNA]</scope>
    <source>
        <strain>AX4</strain>
    </source>
</reference>
<name>END4_DICDI</name>
<accession>Q966U0</accession>
<accession>Q54W14</accession>
<feature type="chain" id="PRO_0000328566" description="Endonuclease 4 homolog">
    <location>
        <begin position="1"/>
        <end position="542"/>
    </location>
</feature>
<feature type="region of interest" description="Disordered" evidence="3">
    <location>
        <begin position="89"/>
        <end position="123"/>
    </location>
</feature>
<feature type="region of interest" description="Disordered" evidence="3">
    <location>
        <begin position="141"/>
        <end position="234"/>
    </location>
</feature>
<feature type="coiled-coil region" evidence="2">
    <location>
        <begin position="171"/>
        <end position="206"/>
    </location>
</feature>
<feature type="short sequence motif" description="Nuclear localization signal" evidence="2">
    <location>
        <begin position="222"/>
        <end position="227"/>
    </location>
</feature>
<feature type="compositionally biased region" description="Low complexity" evidence="3">
    <location>
        <begin position="99"/>
        <end position="115"/>
    </location>
</feature>
<feature type="compositionally biased region" description="Low complexity" evidence="3">
    <location>
        <begin position="147"/>
        <end position="170"/>
    </location>
</feature>
<feature type="compositionally biased region" description="Acidic residues" evidence="3">
    <location>
        <begin position="179"/>
        <end position="196"/>
    </location>
</feature>
<feature type="compositionally biased region" description="Low complexity" evidence="3">
    <location>
        <begin position="205"/>
        <end position="215"/>
    </location>
</feature>
<feature type="compositionally biased region" description="Basic residues" evidence="3">
    <location>
        <begin position="216"/>
        <end position="227"/>
    </location>
</feature>
<feature type="binding site" evidence="1">
    <location>
        <position position="328"/>
    </location>
    <ligand>
        <name>Zn(2+)</name>
        <dbReference type="ChEBI" id="CHEBI:29105"/>
        <label>1</label>
    </ligand>
</feature>
<feature type="binding site" evidence="1">
    <location>
        <position position="368"/>
    </location>
    <ligand>
        <name>Zn(2+)</name>
        <dbReference type="ChEBI" id="CHEBI:29105"/>
        <label>1</label>
    </ligand>
</feature>
<feature type="binding site" evidence="1">
    <location>
        <position position="404"/>
    </location>
    <ligand>
        <name>Zn(2+)</name>
        <dbReference type="ChEBI" id="CHEBI:29105"/>
        <label>1</label>
    </ligand>
</feature>
<feature type="binding site" evidence="1">
    <location>
        <position position="404"/>
    </location>
    <ligand>
        <name>Zn(2+)</name>
        <dbReference type="ChEBI" id="CHEBI:29105"/>
        <label>2</label>
    </ligand>
</feature>
<feature type="binding site" evidence="1">
    <location>
        <position position="438"/>
    </location>
    <ligand>
        <name>Zn(2+)</name>
        <dbReference type="ChEBI" id="CHEBI:29105"/>
        <label>2</label>
    </ligand>
</feature>
<feature type="binding site" evidence="1">
    <location>
        <position position="441"/>
    </location>
    <ligand>
        <name>Zn(2+)</name>
        <dbReference type="ChEBI" id="CHEBI:29105"/>
        <label>3</label>
    </ligand>
</feature>
<feature type="binding site" evidence="1">
    <location>
        <position position="475"/>
    </location>
    <ligand>
        <name>Zn(2+)</name>
        <dbReference type="ChEBI" id="CHEBI:29105"/>
        <label>2</label>
    </ligand>
</feature>
<feature type="binding site" evidence="1">
    <location>
        <position position="488"/>
    </location>
    <ligand>
        <name>Zn(2+)</name>
        <dbReference type="ChEBI" id="CHEBI:29105"/>
        <label>3</label>
    </ligand>
</feature>
<feature type="binding site" evidence="1">
    <location>
        <position position="490"/>
    </location>
    <ligand>
        <name>Zn(2+)</name>
        <dbReference type="ChEBI" id="CHEBI:29105"/>
        <label>3</label>
    </ligand>
</feature>
<feature type="binding site" evidence="1">
    <location>
        <position position="520"/>
    </location>
    <ligand>
        <name>Zn(2+)</name>
        <dbReference type="ChEBI" id="CHEBI:29105"/>
        <label>2</label>
    </ligand>
</feature>
<comment type="function">
    <text evidence="4">Plays a role in DNA repair. It cleaves phosphodiester bonds at apurinic or apyrimidinic sites (AP sites) to produce new 5'-ends that are base-free deoxyribose 5-phosphate residues.</text>
</comment>
<comment type="catalytic activity">
    <reaction>
        <text>Endonucleolytic cleavage to 5'-phosphooligonucleotide end-products.</text>
        <dbReference type="EC" id="3.1.21.2"/>
    </reaction>
</comment>
<comment type="cofactor">
    <cofactor evidence="1">
        <name>Zn(2+)</name>
        <dbReference type="ChEBI" id="CHEBI:29105"/>
    </cofactor>
    <text evidence="1">Binds 3 Zn(2+) ions.</text>
</comment>
<comment type="subcellular location">
    <subcellularLocation>
        <location evidence="5">Nucleus</location>
    </subcellularLocation>
</comment>
<comment type="domain">
    <text evidence="4">The C-terminal part is sufficient to function as an AP endonuclease.</text>
</comment>
<comment type="similarity">
    <text evidence="5">Belongs to the AP endonuclease 2 family.</text>
</comment>
<evidence type="ECO:0000250" key="1"/>
<evidence type="ECO:0000255" key="2"/>
<evidence type="ECO:0000256" key="3">
    <source>
        <dbReference type="SAM" id="MobiDB-lite"/>
    </source>
</evidence>
<evidence type="ECO:0000269" key="4">
    <source>
    </source>
</evidence>
<evidence type="ECO:0000305" key="5"/>
<proteinExistence type="evidence at protein level"/>
<dbReference type="EC" id="3.1.21.2"/>
<dbReference type="EMBL" id="AB055424">
    <property type="protein sequence ID" value="BAB59036.1"/>
    <property type="molecule type" value="mRNA"/>
</dbReference>
<dbReference type="EMBL" id="AAFI02000035">
    <property type="protein sequence ID" value="EAL67433.1"/>
    <property type="molecule type" value="Genomic_DNA"/>
</dbReference>
<dbReference type="RefSeq" id="XP_641436.1">
    <property type="nucleotide sequence ID" value="XM_636344.1"/>
</dbReference>
<dbReference type="SMR" id="Q966U0"/>
<dbReference type="FunCoup" id="Q966U0">
    <property type="interactions" value="304"/>
</dbReference>
<dbReference type="STRING" id="44689.Q966U0"/>
<dbReference type="PaxDb" id="44689-DDB0206584"/>
<dbReference type="EnsemblProtists" id="EAL67433">
    <property type="protein sequence ID" value="EAL67433"/>
    <property type="gene ID" value="DDB_G0279923"/>
</dbReference>
<dbReference type="GeneID" id="8622321"/>
<dbReference type="KEGG" id="ddi:DDB_G0279923"/>
<dbReference type="dictyBase" id="DDB_G0279923">
    <property type="gene designation" value="apnA"/>
</dbReference>
<dbReference type="VEuPathDB" id="AmoebaDB:DDB_G0279923"/>
<dbReference type="eggNOG" id="KOG3997">
    <property type="taxonomic scope" value="Eukaryota"/>
</dbReference>
<dbReference type="HOGENOM" id="CLU_502926_0_0_1"/>
<dbReference type="InParanoid" id="Q966U0"/>
<dbReference type="OMA" id="DEGCQSH"/>
<dbReference type="PhylomeDB" id="Q966U0"/>
<dbReference type="PRO" id="PR:Q966U0"/>
<dbReference type="Proteomes" id="UP000002195">
    <property type="component" value="Chromosome 3"/>
</dbReference>
<dbReference type="GO" id="GO:0005739">
    <property type="term" value="C:mitochondrion"/>
    <property type="evidence" value="ECO:0000318"/>
    <property type="project" value="GO_Central"/>
</dbReference>
<dbReference type="GO" id="GO:0005634">
    <property type="term" value="C:nucleus"/>
    <property type="evidence" value="ECO:0000318"/>
    <property type="project" value="GO_Central"/>
</dbReference>
<dbReference type="GO" id="GO:0008833">
    <property type="term" value="F:deoxyribonuclease IV (phage-T4-induced) activity"/>
    <property type="evidence" value="ECO:0007669"/>
    <property type="project" value="UniProtKB-EC"/>
</dbReference>
<dbReference type="GO" id="GO:0003677">
    <property type="term" value="F:DNA binding"/>
    <property type="evidence" value="ECO:0007669"/>
    <property type="project" value="InterPro"/>
</dbReference>
<dbReference type="GO" id="GO:0003906">
    <property type="term" value="F:DNA-(apurinic or apyrimidinic site) endonuclease activity"/>
    <property type="evidence" value="ECO:0000318"/>
    <property type="project" value="GO_Central"/>
</dbReference>
<dbReference type="GO" id="GO:0008081">
    <property type="term" value="F:phosphoric diester hydrolase activity"/>
    <property type="evidence" value="ECO:0000318"/>
    <property type="project" value="GO_Central"/>
</dbReference>
<dbReference type="GO" id="GO:0008270">
    <property type="term" value="F:zinc ion binding"/>
    <property type="evidence" value="ECO:0007669"/>
    <property type="project" value="InterPro"/>
</dbReference>
<dbReference type="GO" id="GO:0006284">
    <property type="term" value="P:base-excision repair"/>
    <property type="evidence" value="ECO:0000318"/>
    <property type="project" value="GO_Central"/>
</dbReference>
<dbReference type="CDD" id="cd00019">
    <property type="entry name" value="AP2Ec"/>
    <property type="match status" value="1"/>
</dbReference>
<dbReference type="FunFam" id="3.20.20.150:FF:000001">
    <property type="entry name" value="Probable endonuclease 4"/>
    <property type="match status" value="1"/>
</dbReference>
<dbReference type="Gene3D" id="3.20.20.150">
    <property type="entry name" value="Divalent-metal-dependent TIM barrel enzymes"/>
    <property type="match status" value="1"/>
</dbReference>
<dbReference type="HAMAP" id="MF_00152">
    <property type="entry name" value="Nfo"/>
    <property type="match status" value="1"/>
</dbReference>
<dbReference type="InterPro" id="IPR001719">
    <property type="entry name" value="AP_endonuc_2"/>
</dbReference>
<dbReference type="InterPro" id="IPR018246">
    <property type="entry name" value="AP_endonuc_F2_Zn_BS"/>
</dbReference>
<dbReference type="InterPro" id="IPR036237">
    <property type="entry name" value="Xyl_isomerase-like_sf"/>
</dbReference>
<dbReference type="InterPro" id="IPR013022">
    <property type="entry name" value="Xyl_isomerase-like_TIM-brl"/>
</dbReference>
<dbReference type="NCBIfam" id="TIGR00587">
    <property type="entry name" value="nfo"/>
    <property type="match status" value="1"/>
</dbReference>
<dbReference type="NCBIfam" id="NF002199">
    <property type="entry name" value="PRK01060.1-4"/>
    <property type="match status" value="1"/>
</dbReference>
<dbReference type="PANTHER" id="PTHR21445:SF0">
    <property type="entry name" value="APURINIC-APYRIMIDINIC ENDONUCLEASE"/>
    <property type="match status" value="1"/>
</dbReference>
<dbReference type="PANTHER" id="PTHR21445">
    <property type="entry name" value="ENDONUCLEASE IV ENDODEOXYRIBONUCLEASE IV"/>
    <property type="match status" value="1"/>
</dbReference>
<dbReference type="Pfam" id="PF01261">
    <property type="entry name" value="AP_endonuc_2"/>
    <property type="match status" value="1"/>
</dbReference>
<dbReference type="SMART" id="SM00518">
    <property type="entry name" value="AP2Ec"/>
    <property type="match status" value="1"/>
</dbReference>
<dbReference type="SUPFAM" id="SSF51658">
    <property type="entry name" value="Xylose isomerase-like"/>
    <property type="match status" value="1"/>
</dbReference>
<dbReference type="PROSITE" id="PS00729">
    <property type="entry name" value="AP_NUCLEASE_F2_1"/>
    <property type="match status" value="1"/>
</dbReference>
<dbReference type="PROSITE" id="PS00730">
    <property type="entry name" value="AP_NUCLEASE_F2_2"/>
    <property type="match status" value="1"/>
</dbReference>
<dbReference type="PROSITE" id="PS00731">
    <property type="entry name" value="AP_NUCLEASE_F2_3"/>
    <property type="match status" value="1"/>
</dbReference>
<dbReference type="PROSITE" id="PS51432">
    <property type="entry name" value="AP_NUCLEASE_F2_4"/>
    <property type="match status" value="1"/>
</dbReference>